<organism>
    <name type="scientific">Rickettsia felis (strain ATCC VR-1525 / URRWXCal2)</name>
    <name type="common">Rickettsia azadi</name>
    <dbReference type="NCBI Taxonomy" id="315456"/>
    <lineage>
        <taxon>Bacteria</taxon>
        <taxon>Pseudomonadati</taxon>
        <taxon>Pseudomonadota</taxon>
        <taxon>Alphaproteobacteria</taxon>
        <taxon>Rickettsiales</taxon>
        <taxon>Rickettsiaceae</taxon>
        <taxon>Rickettsieae</taxon>
        <taxon>Rickettsia</taxon>
        <taxon>spotted fever group</taxon>
    </lineage>
</organism>
<sequence length="117" mass="13472">MTRAKSGKISKNRHKKILKLAKGYRGRANSCFRVAIEKVEKALQYAYRDRRNRKRDFRGLWIQRINAAVREHGLVYSQFMGALKKAEIDIDRKVLAELAVNNSDGFASIIEQAKAHI</sequence>
<dbReference type="EMBL" id="CP000053">
    <property type="protein sequence ID" value="AAY61200.1"/>
    <property type="molecule type" value="Genomic_DNA"/>
</dbReference>
<dbReference type="SMR" id="Q4UMK8"/>
<dbReference type="STRING" id="315456.RF_0349"/>
<dbReference type="KEGG" id="rfe:RF_0349"/>
<dbReference type="eggNOG" id="COG0292">
    <property type="taxonomic scope" value="Bacteria"/>
</dbReference>
<dbReference type="HOGENOM" id="CLU_123265_0_1_5"/>
<dbReference type="OrthoDB" id="9808966at2"/>
<dbReference type="Proteomes" id="UP000008548">
    <property type="component" value="Chromosome"/>
</dbReference>
<dbReference type="GO" id="GO:1990904">
    <property type="term" value="C:ribonucleoprotein complex"/>
    <property type="evidence" value="ECO:0007669"/>
    <property type="project" value="UniProtKB-KW"/>
</dbReference>
<dbReference type="GO" id="GO:0005840">
    <property type="term" value="C:ribosome"/>
    <property type="evidence" value="ECO:0007669"/>
    <property type="project" value="UniProtKB-KW"/>
</dbReference>
<dbReference type="GO" id="GO:0019843">
    <property type="term" value="F:rRNA binding"/>
    <property type="evidence" value="ECO:0007669"/>
    <property type="project" value="UniProtKB-UniRule"/>
</dbReference>
<dbReference type="GO" id="GO:0003735">
    <property type="term" value="F:structural constituent of ribosome"/>
    <property type="evidence" value="ECO:0007669"/>
    <property type="project" value="InterPro"/>
</dbReference>
<dbReference type="GO" id="GO:0000027">
    <property type="term" value="P:ribosomal large subunit assembly"/>
    <property type="evidence" value="ECO:0007669"/>
    <property type="project" value="UniProtKB-UniRule"/>
</dbReference>
<dbReference type="GO" id="GO:0006412">
    <property type="term" value="P:translation"/>
    <property type="evidence" value="ECO:0007669"/>
    <property type="project" value="InterPro"/>
</dbReference>
<dbReference type="CDD" id="cd07026">
    <property type="entry name" value="Ribosomal_L20"/>
    <property type="match status" value="1"/>
</dbReference>
<dbReference type="FunFam" id="1.10.1900.20:FF:000001">
    <property type="entry name" value="50S ribosomal protein L20"/>
    <property type="match status" value="1"/>
</dbReference>
<dbReference type="Gene3D" id="6.10.160.10">
    <property type="match status" value="1"/>
</dbReference>
<dbReference type="Gene3D" id="1.10.1900.20">
    <property type="entry name" value="Ribosomal protein L20"/>
    <property type="match status" value="1"/>
</dbReference>
<dbReference type="HAMAP" id="MF_00382">
    <property type="entry name" value="Ribosomal_bL20"/>
    <property type="match status" value="1"/>
</dbReference>
<dbReference type="InterPro" id="IPR005813">
    <property type="entry name" value="Ribosomal_bL20"/>
</dbReference>
<dbReference type="InterPro" id="IPR049946">
    <property type="entry name" value="RIBOSOMAL_L20_CS"/>
</dbReference>
<dbReference type="InterPro" id="IPR035566">
    <property type="entry name" value="Ribosomal_protein_bL20_C"/>
</dbReference>
<dbReference type="NCBIfam" id="TIGR01032">
    <property type="entry name" value="rplT_bact"/>
    <property type="match status" value="1"/>
</dbReference>
<dbReference type="PANTHER" id="PTHR10986">
    <property type="entry name" value="39S RIBOSOMAL PROTEIN L20"/>
    <property type="match status" value="1"/>
</dbReference>
<dbReference type="Pfam" id="PF00453">
    <property type="entry name" value="Ribosomal_L20"/>
    <property type="match status" value="1"/>
</dbReference>
<dbReference type="PRINTS" id="PR00062">
    <property type="entry name" value="RIBOSOMALL20"/>
</dbReference>
<dbReference type="SUPFAM" id="SSF74731">
    <property type="entry name" value="Ribosomal protein L20"/>
    <property type="match status" value="1"/>
</dbReference>
<dbReference type="PROSITE" id="PS00937">
    <property type="entry name" value="RIBOSOMAL_L20"/>
    <property type="match status" value="1"/>
</dbReference>
<protein>
    <recommendedName>
        <fullName evidence="1">Large ribosomal subunit protein bL20</fullName>
    </recommendedName>
    <alternativeName>
        <fullName evidence="2">50S ribosomal protein L20</fullName>
    </alternativeName>
</protein>
<name>RL20_RICFE</name>
<comment type="function">
    <text evidence="1">Binds directly to 23S ribosomal RNA and is necessary for the in vitro assembly process of the 50S ribosomal subunit. It is not involved in the protein synthesizing functions of that subunit.</text>
</comment>
<comment type="similarity">
    <text evidence="1">Belongs to the bacterial ribosomal protein bL20 family.</text>
</comment>
<proteinExistence type="inferred from homology"/>
<accession>Q4UMK8</accession>
<gene>
    <name evidence="1" type="primary">rplT</name>
    <name type="ordered locus">RF_0349</name>
</gene>
<reference key="1">
    <citation type="journal article" date="2005" name="PLoS Biol.">
        <title>The genome sequence of Rickettsia felis identifies the first putative conjugative plasmid in an obligate intracellular parasite.</title>
        <authorList>
            <person name="Ogata H."/>
            <person name="Renesto P."/>
            <person name="Audic S."/>
            <person name="Robert C."/>
            <person name="Blanc G."/>
            <person name="Fournier P.-E."/>
            <person name="Parinello H."/>
            <person name="Claverie J.-M."/>
            <person name="Raoult D."/>
        </authorList>
    </citation>
    <scope>NUCLEOTIDE SEQUENCE [LARGE SCALE GENOMIC DNA]</scope>
    <source>
        <strain>ATCC VR-1525 / URRWXCal2</strain>
    </source>
</reference>
<evidence type="ECO:0000255" key="1">
    <source>
        <dbReference type="HAMAP-Rule" id="MF_00382"/>
    </source>
</evidence>
<evidence type="ECO:0000305" key="2"/>
<feature type="chain" id="PRO_0000243729" description="Large ribosomal subunit protein bL20">
    <location>
        <begin position="1"/>
        <end position="117"/>
    </location>
</feature>
<keyword id="KW-0687">Ribonucleoprotein</keyword>
<keyword id="KW-0689">Ribosomal protein</keyword>
<keyword id="KW-0694">RNA-binding</keyword>
<keyword id="KW-0699">rRNA-binding</keyword>